<feature type="chain" id="PRO_0000352317" description="Malonate-semialdehyde dehydrogenase">
    <location>
        <begin position="1"/>
        <end position="487"/>
    </location>
</feature>
<feature type="active site" description="Nucleophile" evidence="1">
    <location>
        <position position="284"/>
    </location>
</feature>
<feature type="binding site" evidence="1">
    <location>
        <position position="150"/>
    </location>
    <ligand>
        <name>NAD(+)</name>
        <dbReference type="ChEBI" id="CHEBI:57540"/>
    </ligand>
</feature>
<feature type="binding site" evidence="1">
    <location>
        <position position="152"/>
    </location>
    <ligand>
        <name>NAD(+)</name>
        <dbReference type="ChEBI" id="CHEBI:57540"/>
    </ligand>
</feature>
<feature type="binding site" evidence="1">
    <location>
        <position position="176"/>
    </location>
    <ligand>
        <name>NAD(+)</name>
        <dbReference type="ChEBI" id="CHEBI:57540"/>
    </ligand>
</feature>
<feature type="binding site" evidence="1">
    <location>
        <position position="179"/>
    </location>
    <ligand>
        <name>NAD(+)</name>
        <dbReference type="ChEBI" id="CHEBI:57540"/>
    </ligand>
</feature>
<feature type="binding site" evidence="1">
    <location>
        <position position="180"/>
    </location>
    <ligand>
        <name>NAD(+)</name>
        <dbReference type="ChEBI" id="CHEBI:57540"/>
    </ligand>
</feature>
<feature type="binding site" evidence="1">
    <location>
        <position position="229"/>
    </location>
    <ligand>
        <name>NAD(+)</name>
        <dbReference type="ChEBI" id="CHEBI:57540"/>
    </ligand>
</feature>
<feature type="binding site" evidence="1">
    <location>
        <position position="251"/>
    </location>
    <ligand>
        <name>NAD(+)</name>
        <dbReference type="ChEBI" id="CHEBI:57540"/>
    </ligand>
</feature>
<feature type="binding site" evidence="1">
    <location>
        <position position="382"/>
    </location>
    <ligand>
        <name>NAD(+)</name>
        <dbReference type="ChEBI" id="CHEBI:57540"/>
    </ligand>
</feature>
<protein>
    <recommendedName>
        <fullName evidence="1">Malonate-semialdehyde dehydrogenase</fullName>
        <shortName evidence="1">MSA dehydrogenase</shortName>
        <ecNumber evidence="1">1.2.1.27</ecNumber>
    </recommendedName>
    <alternativeName>
        <fullName evidence="1">Methylmalonate-semialdehyde dehydrogenase</fullName>
        <shortName evidence="1">MMSA dehydrogenase</shortName>
        <shortName evidence="1">MSDH</shortName>
    </alternativeName>
</protein>
<reference key="1">
    <citation type="journal article" date="2007" name="Nat. Biotechnol.">
        <title>Comparative analysis of the complete genome sequence of the plant growth-promoting bacterium Bacillus amyloliquefaciens FZB42.</title>
        <authorList>
            <person name="Chen X.H."/>
            <person name="Koumoutsi A."/>
            <person name="Scholz R."/>
            <person name="Eisenreich A."/>
            <person name="Schneider K."/>
            <person name="Heinemeyer I."/>
            <person name="Morgenstern B."/>
            <person name="Voss B."/>
            <person name="Hess W.R."/>
            <person name="Reva O."/>
            <person name="Junge H."/>
            <person name="Voigt B."/>
            <person name="Jungblut P.R."/>
            <person name="Vater J."/>
            <person name="Suessmuth R."/>
            <person name="Liesegang H."/>
            <person name="Strittmatter A."/>
            <person name="Gottschalk G."/>
            <person name="Borriss R."/>
        </authorList>
    </citation>
    <scope>NUCLEOTIDE SEQUENCE [LARGE SCALE GENOMIC DNA]</scope>
    <source>
        <strain>DSM 23117 / BGSC 10A6 / LMG 26770 / FZB42</strain>
    </source>
</reference>
<comment type="function">
    <text evidence="1">Catalyzes the oxidation of malonate semialdehyde (MSA) and methylmalonate semialdehyde (MMSA) into acetyl-CoA and propanoyl-CoA, respectively. Is involved in a myo-inositol catabolic pathway. Bicarbonate, and not CO2, is the end-product of the enzymatic reaction.</text>
</comment>
<comment type="catalytic activity">
    <reaction evidence="1">
        <text>3-oxopropanoate + NAD(+) + CoA + H2O = hydrogencarbonate + acetyl-CoA + NADH + H(+)</text>
        <dbReference type="Rhea" id="RHEA:76615"/>
        <dbReference type="ChEBI" id="CHEBI:15377"/>
        <dbReference type="ChEBI" id="CHEBI:15378"/>
        <dbReference type="ChEBI" id="CHEBI:17544"/>
        <dbReference type="ChEBI" id="CHEBI:33190"/>
        <dbReference type="ChEBI" id="CHEBI:57287"/>
        <dbReference type="ChEBI" id="CHEBI:57288"/>
        <dbReference type="ChEBI" id="CHEBI:57540"/>
        <dbReference type="ChEBI" id="CHEBI:57945"/>
        <dbReference type="EC" id="1.2.1.27"/>
    </reaction>
    <physiologicalReaction direction="left-to-right" evidence="1">
        <dbReference type="Rhea" id="RHEA:76616"/>
    </physiologicalReaction>
</comment>
<comment type="catalytic activity">
    <reaction evidence="1">
        <text>2-methyl-3-oxopropanoate + NAD(+) + CoA + H2O = propanoyl-CoA + hydrogencarbonate + NADH + H(+)</text>
        <dbReference type="Rhea" id="RHEA:20804"/>
        <dbReference type="ChEBI" id="CHEBI:15377"/>
        <dbReference type="ChEBI" id="CHEBI:15378"/>
        <dbReference type="ChEBI" id="CHEBI:17544"/>
        <dbReference type="ChEBI" id="CHEBI:57287"/>
        <dbReference type="ChEBI" id="CHEBI:57392"/>
        <dbReference type="ChEBI" id="CHEBI:57540"/>
        <dbReference type="ChEBI" id="CHEBI:57700"/>
        <dbReference type="ChEBI" id="CHEBI:57945"/>
        <dbReference type="EC" id="1.2.1.27"/>
    </reaction>
    <physiologicalReaction direction="left-to-right" evidence="1">
        <dbReference type="Rhea" id="RHEA:20805"/>
    </physiologicalReaction>
</comment>
<comment type="pathway">
    <text evidence="1">Polyol metabolism; myo-inositol degradation into acetyl-CoA; acetyl-CoA from myo-inositol: step 7/7.</text>
</comment>
<comment type="subunit">
    <text evidence="1">Homotetramer.</text>
</comment>
<comment type="similarity">
    <text evidence="1">Belongs to the aldehyde dehydrogenase family. IolA subfamily.</text>
</comment>
<accession>A7ZAI1</accession>
<organism>
    <name type="scientific">Bacillus velezensis (strain DSM 23117 / BGSC 10A6 / LMG 26770 / FZB42)</name>
    <name type="common">Bacillus amyloliquefaciens subsp. plantarum</name>
    <dbReference type="NCBI Taxonomy" id="326423"/>
    <lineage>
        <taxon>Bacteria</taxon>
        <taxon>Bacillati</taxon>
        <taxon>Bacillota</taxon>
        <taxon>Bacilli</taxon>
        <taxon>Bacillales</taxon>
        <taxon>Bacillaceae</taxon>
        <taxon>Bacillus</taxon>
        <taxon>Bacillus amyloliquefaciens group</taxon>
    </lineage>
</organism>
<name>IOLA_BACVZ</name>
<proteinExistence type="inferred from homology"/>
<sequence length="487" mass="53529">MAEIRKLKNYINGEWVESKTDQYEDVINPATKEVMCQVPISTREDVEYAVRSASEAFQTWSKTAVPRRARILFNYQQLLQQNKEELARLITLENGKNTTEALGEVGRGIENVEFAAGAPSLMMGDSLASIATDVEAANYRYPIGVVGGIAPFNFPMMVPCWMFPMAISLGNTFILKPSERTPLLTEKLAELFEQAGLPKGVFNVVHGAHDVVNGVLEHPDIKAISFVGSKPVGEYVFKKGSEHLKRVQALTGAKNHTIVLNDAHLEDTVTNIIGAAFGSAGERCMACAVVTVEEGIADEFMAKLQEKAADIKIGNGLDDGVFLGPVIREDNKKRTHSYIEKGIEEGARLLCDGRENATEDGYFVGPTIFDNVTTDMTIWKDEIFAPVLSVIRVKNLKEAVDIANQSEFANGACLFTSNANAIRYFRENIDAGMLGINLGVPAPMAFFPFSGWKSSFFGTLHANGKDSVDFYTRKKVVTARYPSPDFN</sequence>
<gene>
    <name evidence="1" type="primary">iolA</name>
    <name type="ordered locus">RBAM_036780</name>
</gene>
<evidence type="ECO:0000255" key="1">
    <source>
        <dbReference type="HAMAP-Rule" id="MF_01670"/>
    </source>
</evidence>
<keyword id="KW-0520">NAD</keyword>
<keyword id="KW-0560">Oxidoreductase</keyword>
<dbReference type="EC" id="1.2.1.27" evidence="1"/>
<dbReference type="EMBL" id="CP000560">
    <property type="protein sequence ID" value="ABS76007.1"/>
    <property type="molecule type" value="Genomic_DNA"/>
</dbReference>
<dbReference type="RefSeq" id="WP_012118848.1">
    <property type="nucleotide sequence ID" value="NC_009725.2"/>
</dbReference>
<dbReference type="SMR" id="A7ZAI1"/>
<dbReference type="GeneID" id="93082817"/>
<dbReference type="KEGG" id="bay:RBAM_036780"/>
<dbReference type="HOGENOM" id="CLU_005391_1_10_9"/>
<dbReference type="UniPathway" id="UPA00076">
    <property type="reaction ID" value="UER00148"/>
</dbReference>
<dbReference type="Proteomes" id="UP000001120">
    <property type="component" value="Chromosome"/>
</dbReference>
<dbReference type="GO" id="GO:0018478">
    <property type="term" value="F:malonate-semialdehyde dehydrogenase (acetylating) activity"/>
    <property type="evidence" value="ECO:0007669"/>
    <property type="project" value="UniProtKB-UniRule"/>
</dbReference>
<dbReference type="GO" id="GO:0004491">
    <property type="term" value="F:methylmalonate-semialdehyde dehydrogenase (acylating, NAD) activity"/>
    <property type="evidence" value="ECO:0007669"/>
    <property type="project" value="UniProtKB-UniRule"/>
</dbReference>
<dbReference type="GO" id="GO:0019310">
    <property type="term" value="P:inositol catabolic process"/>
    <property type="evidence" value="ECO:0007669"/>
    <property type="project" value="UniProtKB-UniRule"/>
</dbReference>
<dbReference type="GO" id="GO:0006210">
    <property type="term" value="P:thymine catabolic process"/>
    <property type="evidence" value="ECO:0007669"/>
    <property type="project" value="TreeGrafter"/>
</dbReference>
<dbReference type="GO" id="GO:0006574">
    <property type="term" value="P:valine catabolic process"/>
    <property type="evidence" value="ECO:0007669"/>
    <property type="project" value="TreeGrafter"/>
</dbReference>
<dbReference type="CDD" id="cd07085">
    <property type="entry name" value="ALDH_F6_MMSDH"/>
    <property type="match status" value="1"/>
</dbReference>
<dbReference type="FunFam" id="3.40.309.10:FF:000002">
    <property type="entry name" value="Methylmalonate-semialdehyde dehydrogenase (Acylating)"/>
    <property type="match status" value="1"/>
</dbReference>
<dbReference type="FunFam" id="3.40.605.10:FF:000003">
    <property type="entry name" value="Methylmalonate-semialdehyde dehydrogenase [acylating]"/>
    <property type="match status" value="1"/>
</dbReference>
<dbReference type="Gene3D" id="3.40.605.10">
    <property type="entry name" value="Aldehyde Dehydrogenase, Chain A, domain 1"/>
    <property type="match status" value="1"/>
</dbReference>
<dbReference type="Gene3D" id="3.40.309.10">
    <property type="entry name" value="Aldehyde Dehydrogenase, Chain A, domain 2"/>
    <property type="match status" value="1"/>
</dbReference>
<dbReference type="HAMAP" id="MF_01670">
    <property type="entry name" value="IolA"/>
    <property type="match status" value="1"/>
</dbReference>
<dbReference type="InterPro" id="IPR016161">
    <property type="entry name" value="Ald_DH/histidinol_DH"/>
</dbReference>
<dbReference type="InterPro" id="IPR016163">
    <property type="entry name" value="Ald_DH_C"/>
</dbReference>
<dbReference type="InterPro" id="IPR016160">
    <property type="entry name" value="Ald_DH_CS_CYS"/>
</dbReference>
<dbReference type="InterPro" id="IPR016162">
    <property type="entry name" value="Ald_DH_N"/>
</dbReference>
<dbReference type="InterPro" id="IPR015590">
    <property type="entry name" value="Aldehyde_DH_dom"/>
</dbReference>
<dbReference type="InterPro" id="IPR010061">
    <property type="entry name" value="MeMal-semiAld_DH"/>
</dbReference>
<dbReference type="InterPro" id="IPR023510">
    <property type="entry name" value="MSDH_GmP_bac"/>
</dbReference>
<dbReference type="NCBIfam" id="TIGR01722">
    <property type="entry name" value="MMSDH"/>
    <property type="match status" value="1"/>
</dbReference>
<dbReference type="PANTHER" id="PTHR43866">
    <property type="entry name" value="MALONATE-SEMIALDEHYDE DEHYDROGENASE"/>
    <property type="match status" value="1"/>
</dbReference>
<dbReference type="PANTHER" id="PTHR43866:SF4">
    <property type="entry name" value="MALONATE-SEMIALDEHYDE DEHYDROGENASE"/>
    <property type="match status" value="1"/>
</dbReference>
<dbReference type="Pfam" id="PF00171">
    <property type="entry name" value="Aldedh"/>
    <property type="match status" value="1"/>
</dbReference>
<dbReference type="SUPFAM" id="SSF53720">
    <property type="entry name" value="ALDH-like"/>
    <property type="match status" value="1"/>
</dbReference>
<dbReference type="PROSITE" id="PS00070">
    <property type="entry name" value="ALDEHYDE_DEHYDR_CYS"/>
    <property type="match status" value="1"/>
</dbReference>